<keyword id="KW-0044">Antibiotic</keyword>
<keyword id="KW-0929">Antimicrobial</keyword>
<keyword id="KW-0204">Cytolysis</keyword>
<keyword id="KW-0903">Direct protein sequencing</keyword>
<keyword id="KW-1015">Disulfide bond</keyword>
<keyword id="KW-0354">Hemolysis</keyword>
<keyword id="KW-0872">Ion channel impairing toxin</keyword>
<keyword id="KW-0632">Potassium channel impairing toxin</keyword>
<keyword id="KW-0964">Secreted</keyword>
<keyword id="KW-0732">Signal</keyword>
<keyword id="KW-0800">Toxin</keyword>
<reference key="1">
    <citation type="journal article" date="2010" name="Biochim. Biophys. Acta">
        <title>MeuTXKbeta1, a scorpion venom-derived two-domain potassium channel toxin-like peptide with cytolytic activity.</title>
        <authorList>
            <person name="Zhu S."/>
            <person name="Gao B."/>
            <person name="Aumelas A."/>
            <person name="Del Carmen Rodriguez M."/>
            <person name="Lanz-Mendoza H."/>
            <person name="Peigneur S."/>
            <person name="Diego-Garcia E."/>
            <person name="Martin-Eauclaire M.-F."/>
            <person name="Tytgat J."/>
            <person name="Possani L.D."/>
        </authorList>
    </citation>
    <scope>NUCLEOTIDE SEQUENCE [MRNA]</scope>
    <scope>PROTEIN SEQUENCE OF 20-23</scope>
    <scope>FUNCTION</scope>
    <scope>MASS SPECTROMETRY</scope>
    <scope>SUBCELLULAR LOCATION</scope>
    <source>
        <tissue>Venom</tissue>
        <tissue>Venom gland</tissue>
    </source>
</reference>
<feature type="signal peptide" evidence="2">
    <location>
        <begin position="1"/>
        <end position="19"/>
    </location>
</feature>
<feature type="chain" id="PRO_0000394022" description="Potassium channel toxin MeuTXK-beta-1" evidence="5">
    <location>
        <begin position="20"/>
        <end position="91"/>
    </location>
</feature>
<feature type="domain" description="BetaSPN-type CS-alpha/beta" evidence="1">
    <location>
        <begin position="54"/>
        <end position="91"/>
    </location>
</feature>
<feature type="disulfide bond" evidence="1">
    <location>
        <begin position="57"/>
        <end position="78"/>
    </location>
</feature>
<feature type="disulfide bond" evidence="1">
    <location>
        <begin position="64"/>
        <end position="83"/>
    </location>
</feature>
<feature type="disulfide bond" evidence="1">
    <location>
        <begin position="68"/>
        <end position="85"/>
    </location>
</feature>
<evidence type="ECO:0000255" key="1">
    <source>
        <dbReference type="PROSITE-ProRule" id="PRU01209"/>
    </source>
</evidence>
<evidence type="ECO:0000269" key="2">
    <source>
    </source>
</evidence>
<evidence type="ECO:0000303" key="3">
    <source>
    </source>
</evidence>
<evidence type="ECO:0000305" key="4"/>
<evidence type="ECO:0000305" key="5">
    <source>
    </source>
</evidence>
<organism>
    <name type="scientific">Mesobuthus eupeus</name>
    <name type="common">Lesser Asian scorpion</name>
    <name type="synonym">Buthus eupeus</name>
    <dbReference type="NCBI Taxonomy" id="34648"/>
    <lineage>
        <taxon>Eukaryota</taxon>
        <taxon>Metazoa</taxon>
        <taxon>Ecdysozoa</taxon>
        <taxon>Arthropoda</taxon>
        <taxon>Chelicerata</taxon>
        <taxon>Arachnida</taxon>
        <taxon>Scorpiones</taxon>
        <taxon>Buthida</taxon>
        <taxon>Buthoidea</taxon>
        <taxon>Buthidae</taxon>
        <taxon>Mesobuthus</taxon>
    </lineage>
</organism>
<sequence>MQRNLVVLLFLGMVALSSCGFREKHFQRFVKYAVPESTLRTVLQTVVHKVGKTQFGCPAYQGYCDDHCQDIEKKEGFCHGFKCKCGIPMGF</sequence>
<proteinExistence type="evidence at protein level"/>
<accession>A9XE60</accession>
<name>KBX11_MESEU</name>
<protein>
    <recommendedName>
        <fullName evidence="5">Potassium channel toxin MeuTXK-beta-1</fullName>
        <shortName evidence="3">MeuTXKbeta1</shortName>
    </recommendedName>
</protein>
<comment type="function">
    <text evidence="2">Has a low affinity binding to potassium channels of rat brain synaptosomes. Displays weak antibacterial activity against Stenotrophomonas sp. Strongly inhibits the development of the Plasmodium berghei ookinetes. Displays slight hemolytic effect on mouse erythrocytes. Induces cytolysis on Xenopus oocytes at high concentrations. Is not toxic towards mice and towards the insect Tenebrio molitor.</text>
</comment>
<comment type="subcellular location">
    <subcellularLocation>
        <location evidence="2">Secreted</location>
    </subcellularLocation>
</comment>
<comment type="tissue specificity">
    <text evidence="5">Expressed by the venom gland.</text>
</comment>
<comment type="mass spectrometry"/>
<comment type="similarity">
    <text evidence="4">Belongs to the long chain scorpion toxin family. Class 1 subfamily.</text>
</comment>
<dbReference type="EMBL" id="EF190325">
    <property type="protein sequence ID" value="ABP35519.1"/>
    <property type="molecule type" value="mRNA"/>
</dbReference>
<dbReference type="BMRB" id="A9XE60"/>
<dbReference type="SMR" id="A9XE60"/>
<dbReference type="GO" id="GO:0005576">
    <property type="term" value="C:extracellular region"/>
    <property type="evidence" value="ECO:0007669"/>
    <property type="project" value="UniProtKB-SubCell"/>
</dbReference>
<dbReference type="GO" id="GO:0015459">
    <property type="term" value="F:potassium channel regulator activity"/>
    <property type="evidence" value="ECO:0007669"/>
    <property type="project" value="UniProtKB-KW"/>
</dbReference>
<dbReference type="GO" id="GO:0090729">
    <property type="term" value="F:toxin activity"/>
    <property type="evidence" value="ECO:0007669"/>
    <property type="project" value="UniProtKB-KW"/>
</dbReference>
<dbReference type="GO" id="GO:0042742">
    <property type="term" value="P:defense response to bacterium"/>
    <property type="evidence" value="ECO:0007669"/>
    <property type="project" value="UniProtKB-KW"/>
</dbReference>
<dbReference type="GO" id="GO:0031640">
    <property type="term" value="P:killing of cells of another organism"/>
    <property type="evidence" value="ECO:0007669"/>
    <property type="project" value="UniProtKB-KW"/>
</dbReference>
<dbReference type="InterPro" id="IPR029237">
    <property type="entry name" value="Long_scorpion_toxin_alpha/beta"/>
</dbReference>
<dbReference type="Pfam" id="PF14866">
    <property type="entry name" value="Scorpion_toxin_alpha-beta"/>
    <property type="match status" value="1"/>
</dbReference>
<dbReference type="PROSITE" id="PS51862">
    <property type="entry name" value="BSPN_CSAB"/>
    <property type="match status" value="1"/>
</dbReference>